<comment type="function">
    <text evidence="1">May play a role in cell survival and cell growth. May suppress the transcriptional activity of p53/TP53 (By similarity).</text>
</comment>
<comment type="subunit">
    <text evidence="1">Interacts with the DNA-binding domain of p53/TP53.</text>
</comment>
<comment type="subcellular location">
    <subcellularLocation>
        <location evidence="2">Endoplasmic reticulum membrane</location>
        <topology evidence="4">Single-pass membrane protein</topology>
    </subcellularLocation>
    <subcellularLocation>
        <location evidence="2">Mitochondrion outer membrane</location>
        <topology evidence="4">Single-pass membrane protein</topology>
    </subcellularLocation>
</comment>
<sequence length="306" mass="33422">MGGARDVGWVAAGLVLGAGACYCIYRLTRGPRRGGRRLRPSRSAEDLTEGSYDAILSAEQLEKLLYLLESTDDPIITEKALVTLGNNAAFSTNQAIIRELGGIPIVGSKINSLNQSIKEKALNALNNLSVNVENQTKIKIYVRQVCEDVFADPLNSAVQLAALRLLTNMTVTNDYQHLLSNYITGLLHLLLIGNGSTKVQVLKLLLNLSENPAMTEGLLSAQVDSSFLSLYDGQMANEILLRALTLFQNINNCLRVEGRLANQLPFAKGSLFFLLYGEECAQKMKALACHPDVDVKEKALAIKPKF</sequence>
<name>ARM10_RAT</name>
<dbReference type="EMBL" id="BC161913">
    <property type="protein sequence ID" value="AAI61913.1"/>
    <property type="molecule type" value="mRNA"/>
</dbReference>
<dbReference type="RefSeq" id="NP_001100046.2">
    <property type="nucleotide sequence ID" value="NM_001106576.2"/>
</dbReference>
<dbReference type="SMR" id="B1WBW4"/>
<dbReference type="FunCoup" id="B1WBW4">
    <property type="interactions" value="3557"/>
</dbReference>
<dbReference type="STRING" id="10116.ENSRNOP00000042700"/>
<dbReference type="iPTMnet" id="B1WBW4"/>
<dbReference type="PhosphoSitePlus" id="B1WBW4"/>
<dbReference type="SwissPalm" id="B1WBW4"/>
<dbReference type="jPOST" id="B1WBW4"/>
<dbReference type="PaxDb" id="10116-ENSRNOP00000042700"/>
<dbReference type="PeptideAtlas" id="B1WBW4"/>
<dbReference type="Ensembl" id="ENSRNOT00000044020.4">
    <property type="protein sequence ID" value="ENSRNOP00000042700.3"/>
    <property type="gene ID" value="ENSRNOG00000012785.6"/>
</dbReference>
<dbReference type="GeneID" id="296758"/>
<dbReference type="KEGG" id="rno:296758"/>
<dbReference type="AGR" id="RGD:1305915"/>
<dbReference type="CTD" id="83787"/>
<dbReference type="RGD" id="1305915">
    <property type="gene designation" value="Armc10"/>
</dbReference>
<dbReference type="eggNOG" id="ENOG502RZRU">
    <property type="taxonomic scope" value="Eukaryota"/>
</dbReference>
<dbReference type="GeneTree" id="ENSGT00940000159546"/>
<dbReference type="HOGENOM" id="CLU_037187_0_0_1"/>
<dbReference type="InParanoid" id="B1WBW4"/>
<dbReference type="OMA" id="VTNDYHY"/>
<dbReference type="OrthoDB" id="10017790at2759"/>
<dbReference type="PhylomeDB" id="B1WBW4"/>
<dbReference type="TreeFam" id="TF335652"/>
<dbReference type="PRO" id="PR:B1WBW4"/>
<dbReference type="Proteomes" id="UP000002494">
    <property type="component" value="Chromosome 4"/>
</dbReference>
<dbReference type="Bgee" id="ENSRNOG00000012785">
    <property type="expression patterns" value="Expressed in ovary and 20 other cell types or tissues"/>
</dbReference>
<dbReference type="GO" id="GO:0005783">
    <property type="term" value="C:endoplasmic reticulum"/>
    <property type="evidence" value="ECO:0000266"/>
    <property type="project" value="RGD"/>
</dbReference>
<dbReference type="GO" id="GO:0005789">
    <property type="term" value="C:endoplasmic reticulum membrane"/>
    <property type="evidence" value="ECO:0007669"/>
    <property type="project" value="UniProtKB-SubCell"/>
</dbReference>
<dbReference type="GO" id="GO:0005741">
    <property type="term" value="C:mitochondrial outer membrane"/>
    <property type="evidence" value="ECO:0007669"/>
    <property type="project" value="UniProtKB-SubCell"/>
</dbReference>
<dbReference type="GO" id="GO:0005739">
    <property type="term" value="C:mitochondrion"/>
    <property type="evidence" value="ECO:0000318"/>
    <property type="project" value="GO_Central"/>
</dbReference>
<dbReference type="Gene3D" id="1.25.10.10">
    <property type="entry name" value="Leucine-rich Repeat Variant"/>
    <property type="match status" value="2"/>
</dbReference>
<dbReference type="InterPro" id="IPR011989">
    <property type="entry name" value="ARM-like"/>
</dbReference>
<dbReference type="InterPro" id="IPR006911">
    <property type="entry name" value="ARM-rpt_dom"/>
</dbReference>
<dbReference type="InterPro" id="IPR016024">
    <property type="entry name" value="ARM-type_fold"/>
</dbReference>
<dbReference type="InterPro" id="IPR051303">
    <property type="entry name" value="Armcx_regulator"/>
</dbReference>
<dbReference type="PANTHER" id="PTHR15712:SF23">
    <property type="entry name" value="ARMADILLO REPEAT CONTAINING 10"/>
    <property type="match status" value="1"/>
</dbReference>
<dbReference type="PANTHER" id="PTHR15712">
    <property type="entry name" value="ARMADILLO REPEAT CONTAINING PROTEIN"/>
    <property type="match status" value="1"/>
</dbReference>
<dbReference type="Pfam" id="PF04826">
    <property type="entry name" value="Arm_2"/>
    <property type="match status" value="1"/>
</dbReference>
<dbReference type="SUPFAM" id="SSF48371">
    <property type="entry name" value="ARM repeat"/>
    <property type="match status" value="1"/>
</dbReference>
<feature type="chain" id="PRO_0000346791" description="Armadillo repeat-containing protein 10">
    <location>
        <begin position="1"/>
        <end position="306"/>
    </location>
</feature>
<feature type="transmembrane region" description="Helical" evidence="4">
    <location>
        <begin position="7"/>
        <end position="29"/>
    </location>
</feature>
<feature type="repeat" description="ARM">
    <location>
        <begin position="101"/>
        <end position="143"/>
    </location>
</feature>
<feature type="modified residue" description="Phosphoserine" evidence="5">
    <location>
        <position position="43"/>
    </location>
</feature>
<feature type="modified residue" description="Phosphothreonine" evidence="3">
    <location>
        <position position="48"/>
    </location>
</feature>
<organism>
    <name type="scientific">Rattus norvegicus</name>
    <name type="common">Rat</name>
    <dbReference type="NCBI Taxonomy" id="10116"/>
    <lineage>
        <taxon>Eukaryota</taxon>
        <taxon>Metazoa</taxon>
        <taxon>Chordata</taxon>
        <taxon>Craniata</taxon>
        <taxon>Vertebrata</taxon>
        <taxon>Euteleostomi</taxon>
        <taxon>Mammalia</taxon>
        <taxon>Eutheria</taxon>
        <taxon>Euarchontoglires</taxon>
        <taxon>Glires</taxon>
        <taxon>Rodentia</taxon>
        <taxon>Myomorpha</taxon>
        <taxon>Muroidea</taxon>
        <taxon>Muridae</taxon>
        <taxon>Murinae</taxon>
        <taxon>Rattus</taxon>
    </lineage>
</organism>
<gene>
    <name type="primary">Armc10</name>
</gene>
<keyword id="KW-0256">Endoplasmic reticulum</keyword>
<keyword id="KW-0341">Growth regulation</keyword>
<keyword id="KW-0472">Membrane</keyword>
<keyword id="KW-0496">Mitochondrion</keyword>
<keyword id="KW-1000">Mitochondrion outer membrane</keyword>
<keyword id="KW-0597">Phosphoprotein</keyword>
<keyword id="KW-1185">Reference proteome</keyword>
<keyword id="KW-0812">Transmembrane</keyword>
<keyword id="KW-1133">Transmembrane helix</keyword>
<protein>
    <recommendedName>
        <fullName>Armadillo repeat-containing protein 10</fullName>
    </recommendedName>
</protein>
<proteinExistence type="evidence at protein level"/>
<evidence type="ECO:0000250" key="1"/>
<evidence type="ECO:0000250" key="2">
    <source>
        <dbReference type="UniProtKB" id="Q8N2F6"/>
    </source>
</evidence>
<evidence type="ECO:0000250" key="3">
    <source>
        <dbReference type="UniProtKB" id="Q9D0L7"/>
    </source>
</evidence>
<evidence type="ECO:0000255" key="4"/>
<evidence type="ECO:0007744" key="5">
    <source>
    </source>
</evidence>
<accession>B1WBW4</accession>
<reference key="1">
    <citation type="journal article" date="2004" name="Genome Res.">
        <title>The status, quality, and expansion of the NIH full-length cDNA project: the Mammalian Gene Collection (MGC).</title>
        <authorList>
            <consortium name="The MGC Project Team"/>
        </authorList>
    </citation>
    <scope>NUCLEOTIDE SEQUENCE [LARGE SCALE MRNA]</scope>
    <source>
        <tissue>Brain</tissue>
    </source>
</reference>
<reference key="2">
    <citation type="journal article" date="2012" name="Nat. Commun.">
        <title>Quantitative maps of protein phosphorylation sites across 14 different rat organs and tissues.</title>
        <authorList>
            <person name="Lundby A."/>
            <person name="Secher A."/>
            <person name="Lage K."/>
            <person name="Nordsborg N.B."/>
            <person name="Dmytriyev A."/>
            <person name="Lundby C."/>
            <person name="Olsen J.V."/>
        </authorList>
    </citation>
    <scope>PHOSPHORYLATION [LARGE SCALE ANALYSIS] AT SER-43</scope>
    <scope>IDENTIFICATION BY MASS SPECTROMETRY [LARGE SCALE ANALYSIS]</scope>
</reference>